<keyword id="KW-0067">ATP-binding</keyword>
<keyword id="KW-0963">Cytoplasm</keyword>
<keyword id="KW-0315">Glutamine amidotransferase</keyword>
<keyword id="KW-0378">Hydrolase</keyword>
<keyword id="KW-0436">Ligase</keyword>
<keyword id="KW-0547">Nucleotide-binding</keyword>
<keyword id="KW-0658">Purine biosynthesis</keyword>
<keyword id="KW-1185">Reference proteome</keyword>
<evidence type="ECO:0000255" key="1">
    <source>
        <dbReference type="HAMAP-Rule" id="MF_00421"/>
    </source>
</evidence>
<accession>B2GF73</accession>
<name>PURQ_LIMF3</name>
<protein>
    <recommendedName>
        <fullName evidence="1">Phosphoribosylformylglycinamidine synthase subunit PurQ</fullName>
        <shortName evidence="1">FGAM synthase</shortName>
        <ecNumber evidence="1">6.3.5.3</ecNumber>
    </recommendedName>
    <alternativeName>
        <fullName evidence="1">Formylglycinamide ribonucleotide amidotransferase subunit I</fullName>
        <shortName evidence="1">FGAR amidotransferase I</shortName>
        <shortName evidence="1">FGAR-AT I</shortName>
    </alternativeName>
    <alternativeName>
        <fullName evidence="1">Glutaminase PurQ</fullName>
        <ecNumber evidence="1">3.5.1.2</ecNumber>
    </alternativeName>
    <alternativeName>
        <fullName evidence="1">Phosphoribosylformylglycinamidine synthase subunit I</fullName>
    </alternativeName>
</protein>
<reference key="1">
    <citation type="journal article" date="2008" name="DNA Res.">
        <title>Comparative genome analysis of Lactobacillus reuteri and Lactobacillus fermentum reveal a genomic island for reuterin and cobalamin production.</title>
        <authorList>
            <person name="Morita H."/>
            <person name="Toh H."/>
            <person name="Fukuda S."/>
            <person name="Horikawa H."/>
            <person name="Oshima K."/>
            <person name="Suzuki T."/>
            <person name="Murakami M."/>
            <person name="Hisamatsu S."/>
            <person name="Kato Y."/>
            <person name="Takizawa T."/>
            <person name="Fukuoka H."/>
            <person name="Yoshimura T."/>
            <person name="Itoh K."/>
            <person name="O'Sullivan D.J."/>
            <person name="McKay L.L."/>
            <person name="Ohno H."/>
            <person name="Kikuchi J."/>
            <person name="Masaoka T."/>
            <person name="Hattori M."/>
        </authorList>
    </citation>
    <scope>NUCLEOTIDE SEQUENCE [LARGE SCALE GENOMIC DNA]</scope>
    <source>
        <strain>NBRC 3956 / LMG 18251</strain>
    </source>
</reference>
<proteinExistence type="inferred from homology"/>
<comment type="function">
    <text evidence="1">Part of the phosphoribosylformylglycinamidine synthase complex involved in the purines biosynthetic pathway. Catalyzes the ATP-dependent conversion of formylglycinamide ribonucleotide (FGAR) and glutamine to yield formylglycinamidine ribonucleotide (FGAM) and glutamate. The FGAM synthase complex is composed of three subunits. PurQ produces an ammonia molecule by converting glutamine to glutamate. PurL transfers the ammonia molecule to FGAR to form FGAM in an ATP-dependent manner. PurS interacts with PurQ and PurL and is thought to assist in the transfer of the ammonia molecule from PurQ to PurL.</text>
</comment>
<comment type="catalytic activity">
    <reaction evidence="1">
        <text>N(2)-formyl-N(1)-(5-phospho-beta-D-ribosyl)glycinamide + L-glutamine + ATP + H2O = 2-formamido-N(1)-(5-O-phospho-beta-D-ribosyl)acetamidine + L-glutamate + ADP + phosphate + H(+)</text>
        <dbReference type="Rhea" id="RHEA:17129"/>
        <dbReference type="ChEBI" id="CHEBI:15377"/>
        <dbReference type="ChEBI" id="CHEBI:15378"/>
        <dbReference type="ChEBI" id="CHEBI:29985"/>
        <dbReference type="ChEBI" id="CHEBI:30616"/>
        <dbReference type="ChEBI" id="CHEBI:43474"/>
        <dbReference type="ChEBI" id="CHEBI:58359"/>
        <dbReference type="ChEBI" id="CHEBI:147286"/>
        <dbReference type="ChEBI" id="CHEBI:147287"/>
        <dbReference type="ChEBI" id="CHEBI:456216"/>
        <dbReference type="EC" id="6.3.5.3"/>
    </reaction>
</comment>
<comment type="catalytic activity">
    <reaction evidence="1">
        <text>L-glutamine + H2O = L-glutamate + NH4(+)</text>
        <dbReference type="Rhea" id="RHEA:15889"/>
        <dbReference type="ChEBI" id="CHEBI:15377"/>
        <dbReference type="ChEBI" id="CHEBI:28938"/>
        <dbReference type="ChEBI" id="CHEBI:29985"/>
        <dbReference type="ChEBI" id="CHEBI:58359"/>
        <dbReference type="EC" id="3.5.1.2"/>
    </reaction>
</comment>
<comment type="pathway">
    <text evidence="1">Purine metabolism; IMP biosynthesis via de novo pathway; 5-amino-1-(5-phospho-D-ribosyl)imidazole from N(2)-formyl-N(1)-(5-phospho-D-ribosyl)glycinamide: step 1/2.</text>
</comment>
<comment type="subunit">
    <text evidence="1">Part of the FGAM synthase complex composed of 1 PurL, 1 PurQ and 2 PurS subunits.</text>
</comment>
<comment type="subcellular location">
    <subcellularLocation>
        <location evidence="1">Cytoplasm</location>
    </subcellularLocation>
</comment>
<organism>
    <name type="scientific">Limosilactobacillus fermentum (strain NBRC 3956 / LMG 18251)</name>
    <name type="common">Lactobacillus fermentum</name>
    <dbReference type="NCBI Taxonomy" id="334390"/>
    <lineage>
        <taxon>Bacteria</taxon>
        <taxon>Bacillati</taxon>
        <taxon>Bacillota</taxon>
        <taxon>Bacilli</taxon>
        <taxon>Lactobacillales</taxon>
        <taxon>Lactobacillaceae</taxon>
        <taxon>Limosilactobacillus</taxon>
    </lineage>
</organism>
<gene>
    <name evidence="1" type="primary">purQ</name>
    <name type="ordered locus">LAF_0126</name>
</gene>
<feature type="chain" id="PRO_1000124122" description="Phosphoribosylformylglycinamidine synthase subunit PurQ">
    <location>
        <begin position="1"/>
        <end position="226"/>
    </location>
</feature>
<feature type="domain" description="Glutamine amidotransferase type-1" evidence="1">
    <location>
        <begin position="2"/>
        <end position="226"/>
    </location>
</feature>
<feature type="active site" description="Nucleophile" evidence="1">
    <location>
        <position position="86"/>
    </location>
</feature>
<feature type="active site" evidence="1">
    <location>
        <position position="195"/>
    </location>
</feature>
<feature type="active site" evidence="1">
    <location>
        <position position="197"/>
    </location>
</feature>
<sequence length="226" mass="24500">MKIAVIVFPGSNCDIDLYEALKTVCGADVDYVDHQQTSLAGYDAVMLPGGFSYGDYLRAGAIARFAKIMPEVKRLADEGKPVFGTCNGFQILTEAGLLPGALKKNDSQNFVCKTTPLEVVNNQTIFTSQYQEHERINLPIAHADGSYFADQATLDELEANHQVVFRYAEENPNGSLNNIAGICNRAGNVLGMMPHPERAVEAILGNTDGLRVFKSLLENGTVIAEG</sequence>
<dbReference type="EC" id="6.3.5.3" evidence="1"/>
<dbReference type="EC" id="3.5.1.2" evidence="1"/>
<dbReference type="EMBL" id="AP008937">
    <property type="protein sequence ID" value="BAG26462.1"/>
    <property type="molecule type" value="Genomic_DNA"/>
</dbReference>
<dbReference type="RefSeq" id="WP_003682494.1">
    <property type="nucleotide sequence ID" value="NC_010610.1"/>
</dbReference>
<dbReference type="SMR" id="B2GF73"/>
<dbReference type="KEGG" id="lfe:LAF_0126"/>
<dbReference type="eggNOG" id="COG0047">
    <property type="taxonomic scope" value="Bacteria"/>
</dbReference>
<dbReference type="HOGENOM" id="CLU_001031_3_1_9"/>
<dbReference type="UniPathway" id="UPA00074">
    <property type="reaction ID" value="UER00128"/>
</dbReference>
<dbReference type="Proteomes" id="UP000001697">
    <property type="component" value="Chromosome"/>
</dbReference>
<dbReference type="GO" id="GO:0005737">
    <property type="term" value="C:cytoplasm"/>
    <property type="evidence" value="ECO:0007669"/>
    <property type="project" value="UniProtKB-SubCell"/>
</dbReference>
<dbReference type="GO" id="GO:0005524">
    <property type="term" value="F:ATP binding"/>
    <property type="evidence" value="ECO:0007669"/>
    <property type="project" value="UniProtKB-KW"/>
</dbReference>
<dbReference type="GO" id="GO:0004359">
    <property type="term" value="F:glutaminase activity"/>
    <property type="evidence" value="ECO:0007669"/>
    <property type="project" value="UniProtKB-EC"/>
</dbReference>
<dbReference type="GO" id="GO:0004642">
    <property type="term" value="F:phosphoribosylformylglycinamidine synthase activity"/>
    <property type="evidence" value="ECO:0007669"/>
    <property type="project" value="UniProtKB-UniRule"/>
</dbReference>
<dbReference type="GO" id="GO:0006189">
    <property type="term" value="P:'de novo' IMP biosynthetic process"/>
    <property type="evidence" value="ECO:0007669"/>
    <property type="project" value="UniProtKB-UniRule"/>
</dbReference>
<dbReference type="CDD" id="cd01740">
    <property type="entry name" value="GATase1_FGAR_AT"/>
    <property type="match status" value="1"/>
</dbReference>
<dbReference type="FunFam" id="3.40.50.880:FF:000019">
    <property type="entry name" value="Phosphoribosylformylglycinamidine synthase subunit PurQ"/>
    <property type="match status" value="1"/>
</dbReference>
<dbReference type="Gene3D" id="3.40.50.880">
    <property type="match status" value="1"/>
</dbReference>
<dbReference type="HAMAP" id="MF_00421">
    <property type="entry name" value="PurQ"/>
    <property type="match status" value="1"/>
</dbReference>
<dbReference type="InterPro" id="IPR029062">
    <property type="entry name" value="Class_I_gatase-like"/>
</dbReference>
<dbReference type="InterPro" id="IPR010075">
    <property type="entry name" value="PRibForGlyAmidine_synth_PurQ"/>
</dbReference>
<dbReference type="NCBIfam" id="TIGR01737">
    <property type="entry name" value="FGAM_synth_I"/>
    <property type="match status" value="1"/>
</dbReference>
<dbReference type="NCBIfam" id="NF002957">
    <property type="entry name" value="PRK03619.1"/>
    <property type="match status" value="1"/>
</dbReference>
<dbReference type="PANTHER" id="PTHR47552">
    <property type="entry name" value="PHOSPHORIBOSYLFORMYLGLYCINAMIDINE SYNTHASE SUBUNIT PURQ"/>
    <property type="match status" value="1"/>
</dbReference>
<dbReference type="PANTHER" id="PTHR47552:SF1">
    <property type="entry name" value="PHOSPHORIBOSYLFORMYLGLYCINAMIDINE SYNTHASE SUBUNIT PURQ"/>
    <property type="match status" value="1"/>
</dbReference>
<dbReference type="Pfam" id="PF13507">
    <property type="entry name" value="GATase_5"/>
    <property type="match status" value="1"/>
</dbReference>
<dbReference type="PIRSF" id="PIRSF001586">
    <property type="entry name" value="FGAM_synth_I"/>
    <property type="match status" value="1"/>
</dbReference>
<dbReference type="SMART" id="SM01211">
    <property type="entry name" value="GATase_5"/>
    <property type="match status" value="1"/>
</dbReference>
<dbReference type="SUPFAM" id="SSF52317">
    <property type="entry name" value="Class I glutamine amidotransferase-like"/>
    <property type="match status" value="1"/>
</dbReference>
<dbReference type="PROSITE" id="PS51273">
    <property type="entry name" value="GATASE_TYPE_1"/>
    <property type="match status" value="1"/>
</dbReference>